<comment type="function">
    <text>This protein is one of the chains of the nonenzymatic membrane component (F0) of mitochondrial ATPase.</text>
</comment>
<comment type="subunit">
    <text>F-type ATPases have 2 components, CF(1) - the catalytic core - and CF(0) - the membrane proton channel. CF(1) has five subunits: alpha(3), beta(3), gamma(1), delta(1), epsilon(1). CF(0) has three main subunits: a, b and c.</text>
</comment>
<comment type="subcellular location">
    <subcellularLocation>
        <location evidence="4">Mitochondrion membrane</location>
        <topology evidence="4">Multi-pass membrane protein</topology>
    </subcellularLocation>
</comment>
<comment type="RNA editing">
    <location>
        <position position="7" evidence="3"/>
    </location>
    <location>
        <position position="20" evidence="3"/>
    </location>
    <location>
        <position position="28" evidence="3"/>
    </location>
    <location>
        <position position="31" evidence="3"/>
    </location>
    <location>
        <position position="64" evidence="3"/>
    </location>
    <location>
        <position position="71" evidence="3"/>
    </location>
    <location>
        <position position="75" evidence="3"/>
    </location>
    <text>The stop codon at position 75 is created by RNA editing.</text>
</comment>
<comment type="similarity">
    <text evidence="4">Belongs to the ATPase C chain family.</text>
</comment>
<reference key="1">
    <citation type="journal article" date="2002" name="Mol. Genet. Genomics">
        <title>The complete sequence of the rice (Oryza sativa L.) mitochondrial genome: frequent DNA sequence acquisition and loss during the evolution of flowering plants.</title>
        <authorList>
            <person name="Notsu Y."/>
            <person name="Masood S."/>
            <person name="Nishikawa T."/>
            <person name="Kubo N."/>
            <person name="Akiduki G."/>
            <person name="Nakazono M."/>
            <person name="Hirai A."/>
            <person name="Kadowaki K."/>
        </authorList>
    </citation>
    <scope>NUCLEOTIDE SEQUENCE [LARGE SCALE GENOMIC DNA]</scope>
    <scope>RNA EDITING</scope>
    <source>
        <strain>cv. Nipponbare</strain>
    </source>
</reference>
<feature type="chain" id="PRO_0000290115" description="ATP synthase subunit 9, mitochondrial">
    <location>
        <begin position="1"/>
        <end position="74"/>
    </location>
</feature>
<feature type="transmembrane region" description="Helical" evidence="2">
    <location>
        <begin position="8"/>
        <end position="28"/>
    </location>
</feature>
<feature type="transmembrane region" description="Helical" evidence="2">
    <location>
        <begin position="53"/>
        <end position="73"/>
    </location>
</feature>
<feature type="site" description="Reversibly protonated during proton transport" evidence="1">
    <location>
        <position position="57"/>
    </location>
</feature>
<organism>
    <name type="scientific">Oryza sativa subsp. japonica</name>
    <name type="common">Rice</name>
    <dbReference type="NCBI Taxonomy" id="39947"/>
    <lineage>
        <taxon>Eukaryota</taxon>
        <taxon>Viridiplantae</taxon>
        <taxon>Streptophyta</taxon>
        <taxon>Embryophyta</taxon>
        <taxon>Tracheophyta</taxon>
        <taxon>Spermatophyta</taxon>
        <taxon>Magnoliopsida</taxon>
        <taxon>Liliopsida</taxon>
        <taxon>Poales</taxon>
        <taxon>Poaceae</taxon>
        <taxon>BOP clade</taxon>
        <taxon>Oryzoideae</taxon>
        <taxon>Oryzeae</taxon>
        <taxon>Oryzinae</taxon>
        <taxon>Oryza</taxon>
        <taxon>Oryza sativa</taxon>
    </lineage>
</organism>
<geneLocation type="mitochondrion"/>
<name>ATP9_ORYSJ</name>
<gene>
    <name type="primary">ATP9</name>
</gene>
<keyword id="KW-0067">ATP-binding</keyword>
<keyword id="KW-0138">CF(0)</keyword>
<keyword id="KW-0375">Hydrogen ion transport</keyword>
<keyword id="KW-0406">Ion transport</keyword>
<keyword id="KW-0446">Lipid-binding</keyword>
<keyword id="KW-0472">Membrane</keyword>
<keyword id="KW-0496">Mitochondrion</keyword>
<keyword id="KW-0547">Nucleotide-binding</keyword>
<keyword id="KW-1185">Reference proteome</keyword>
<keyword id="KW-0691">RNA editing</keyword>
<keyword id="KW-0812">Transmembrane</keyword>
<keyword id="KW-1133">Transmembrane helix</keyword>
<keyword id="KW-0813">Transport</keyword>
<sequence>MLEGAKLIGAGAATIALAGAAVGIGNVFSSLIHSVARNPSLAKQLFGYAILGFALTEAIALFALMMAFLILFVF</sequence>
<proteinExistence type="evidence at transcript level"/>
<protein>
    <recommendedName>
        <fullName>ATP synthase subunit 9, mitochondrial</fullName>
    </recommendedName>
    <alternativeName>
        <fullName>Lipid-binding protein</fullName>
    </alternativeName>
</protein>
<evidence type="ECO:0000250" key="1"/>
<evidence type="ECO:0000255" key="2"/>
<evidence type="ECO:0000269" key="3">
    <source>
    </source>
</evidence>
<evidence type="ECO:0000305" key="4"/>
<accession>P0C519</accession>
<accession>P14863</accession>
<accession>Q7JAI7</accession>
<dbReference type="EMBL" id="BA000029">
    <property type="protein sequence ID" value="BAC19885.1"/>
    <property type="molecule type" value="Genomic_DNA"/>
</dbReference>
<dbReference type="RefSeq" id="YP_002000580.1">
    <property type="nucleotide sequence ID" value="NC_011033.1"/>
</dbReference>
<dbReference type="SMR" id="P0C519"/>
<dbReference type="FunCoup" id="P0C519">
    <property type="interactions" value="319"/>
</dbReference>
<dbReference type="STRING" id="39947.P0C519"/>
<dbReference type="PaxDb" id="39947-P0C519"/>
<dbReference type="GeneID" id="6450130"/>
<dbReference type="KEGG" id="dosa:atp9"/>
<dbReference type="KEGG" id="osa:6450130"/>
<dbReference type="eggNOG" id="ENOG502S4GY">
    <property type="taxonomic scope" value="Eukaryota"/>
</dbReference>
<dbReference type="InParanoid" id="P0C519"/>
<dbReference type="OrthoDB" id="1932197at2759"/>
<dbReference type="Proteomes" id="UP000059680">
    <property type="component" value="Mitochondrion"/>
</dbReference>
<dbReference type="GO" id="GO:0031966">
    <property type="term" value="C:mitochondrial membrane"/>
    <property type="evidence" value="ECO:0007669"/>
    <property type="project" value="UniProtKB-SubCell"/>
</dbReference>
<dbReference type="GO" id="GO:0005739">
    <property type="term" value="C:mitochondrion"/>
    <property type="evidence" value="ECO:0000305"/>
    <property type="project" value="Gramene"/>
</dbReference>
<dbReference type="GO" id="GO:0045259">
    <property type="term" value="C:proton-transporting ATP synthase complex"/>
    <property type="evidence" value="ECO:0007669"/>
    <property type="project" value="UniProtKB-KW"/>
</dbReference>
<dbReference type="GO" id="GO:0033177">
    <property type="term" value="C:proton-transporting two-sector ATPase complex, proton-transporting domain"/>
    <property type="evidence" value="ECO:0007669"/>
    <property type="project" value="InterPro"/>
</dbReference>
<dbReference type="GO" id="GO:0005524">
    <property type="term" value="F:ATP binding"/>
    <property type="evidence" value="ECO:0007669"/>
    <property type="project" value="UniProtKB-KW"/>
</dbReference>
<dbReference type="GO" id="GO:0008289">
    <property type="term" value="F:lipid binding"/>
    <property type="evidence" value="ECO:0007669"/>
    <property type="project" value="UniProtKB-KW"/>
</dbReference>
<dbReference type="GO" id="GO:0015078">
    <property type="term" value="F:proton transmembrane transporter activity"/>
    <property type="evidence" value="ECO:0007669"/>
    <property type="project" value="InterPro"/>
</dbReference>
<dbReference type="GO" id="GO:0015986">
    <property type="term" value="P:proton motive force-driven ATP synthesis"/>
    <property type="evidence" value="ECO:0000318"/>
    <property type="project" value="GO_Central"/>
</dbReference>
<dbReference type="CDD" id="cd18182">
    <property type="entry name" value="ATP-synt_Fo_c_ATP5G3"/>
    <property type="match status" value="1"/>
</dbReference>
<dbReference type="FunFam" id="1.20.20.10:FF:000005">
    <property type="entry name" value="ATP synthase subunit 9, mitochondrial"/>
    <property type="match status" value="1"/>
</dbReference>
<dbReference type="Gene3D" id="1.20.20.10">
    <property type="entry name" value="F1F0 ATP synthase subunit C"/>
    <property type="match status" value="1"/>
</dbReference>
<dbReference type="HAMAP" id="MF_01396">
    <property type="entry name" value="ATP_synth_c_bact"/>
    <property type="match status" value="1"/>
</dbReference>
<dbReference type="InterPro" id="IPR000454">
    <property type="entry name" value="ATP_synth_F0_csu"/>
</dbReference>
<dbReference type="InterPro" id="IPR020537">
    <property type="entry name" value="ATP_synth_F0_csu_DDCD_BS"/>
</dbReference>
<dbReference type="InterPro" id="IPR038662">
    <property type="entry name" value="ATP_synth_F0_csu_sf"/>
</dbReference>
<dbReference type="InterPro" id="IPR002379">
    <property type="entry name" value="ATPase_proteolipid_c-like_dom"/>
</dbReference>
<dbReference type="InterPro" id="IPR035921">
    <property type="entry name" value="F/V-ATP_Csub_sf"/>
</dbReference>
<dbReference type="PANTHER" id="PTHR10031">
    <property type="entry name" value="ATP SYNTHASE LIPID-BINDING PROTEIN, MITOCHONDRIAL"/>
    <property type="match status" value="1"/>
</dbReference>
<dbReference type="PANTHER" id="PTHR10031:SF0">
    <property type="entry name" value="ATPASE PROTEIN 9"/>
    <property type="match status" value="1"/>
</dbReference>
<dbReference type="Pfam" id="PF00137">
    <property type="entry name" value="ATP-synt_C"/>
    <property type="match status" value="1"/>
</dbReference>
<dbReference type="PRINTS" id="PR00124">
    <property type="entry name" value="ATPASEC"/>
</dbReference>
<dbReference type="SUPFAM" id="SSF81333">
    <property type="entry name" value="F1F0 ATP synthase subunit C"/>
    <property type="match status" value="1"/>
</dbReference>
<dbReference type="PROSITE" id="PS00605">
    <property type="entry name" value="ATPASE_C"/>
    <property type="match status" value="1"/>
</dbReference>